<reference key="1">
    <citation type="journal article" date="2006" name="Proc. Natl. Acad. Sci. U.S.A.">
        <title>Comparative genomics of the lactic acid bacteria.</title>
        <authorList>
            <person name="Makarova K.S."/>
            <person name="Slesarev A."/>
            <person name="Wolf Y.I."/>
            <person name="Sorokin A."/>
            <person name="Mirkin B."/>
            <person name="Koonin E.V."/>
            <person name="Pavlov A."/>
            <person name="Pavlova N."/>
            <person name="Karamychev V."/>
            <person name="Polouchine N."/>
            <person name="Shakhova V."/>
            <person name="Grigoriev I."/>
            <person name="Lou Y."/>
            <person name="Rohksar D."/>
            <person name="Lucas S."/>
            <person name="Huang K."/>
            <person name="Goodstein D.M."/>
            <person name="Hawkins T."/>
            <person name="Plengvidhya V."/>
            <person name="Welker D."/>
            <person name="Hughes J."/>
            <person name="Goh Y."/>
            <person name="Benson A."/>
            <person name="Baldwin K."/>
            <person name="Lee J.-H."/>
            <person name="Diaz-Muniz I."/>
            <person name="Dosti B."/>
            <person name="Smeianov V."/>
            <person name="Wechter W."/>
            <person name="Barabote R."/>
            <person name="Lorca G."/>
            <person name="Altermann E."/>
            <person name="Barrangou R."/>
            <person name="Ganesan B."/>
            <person name="Xie Y."/>
            <person name="Rawsthorne H."/>
            <person name="Tamir D."/>
            <person name="Parker C."/>
            <person name="Breidt F."/>
            <person name="Broadbent J.R."/>
            <person name="Hutkins R."/>
            <person name="O'Sullivan D."/>
            <person name="Steele J."/>
            <person name="Unlu G."/>
            <person name="Saier M.H. Jr."/>
            <person name="Klaenhammer T."/>
            <person name="Richardson P."/>
            <person name="Kozyavkin S."/>
            <person name="Weimer B.C."/>
            <person name="Mills D.A."/>
        </authorList>
    </citation>
    <scope>NUCLEOTIDE SEQUENCE [LARGE SCALE GENOMIC DNA]</scope>
    <source>
        <strain>ATCC 25745 / CCUG 21536 / LMG 10740 / 183-1w</strain>
    </source>
</reference>
<gene>
    <name evidence="1" type="primary">rplX</name>
    <name type="ordered locus">PEPE_1407</name>
</gene>
<evidence type="ECO:0000255" key="1">
    <source>
        <dbReference type="HAMAP-Rule" id="MF_01326"/>
    </source>
</evidence>
<evidence type="ECO:0000305" key="2"/>
<feature type="chain" id="PRO_1000052273" description="Large ribosomal subunit protein uL24">
    <location>
        <begin position="1"/>
        <end position="103"/>
    </location>
</feature>
<keyword id="KW-0687">Ribonucleoprotein</keyword>
<keyword id="KW-0689">Ribosomal protein</keyword>
<keyword id="KW-0694">RNA-binding</keyword>
<keyword id="KW-0699">rRNA-binding</keyword>
<organism>
    <name type="scientific">Pediococcus pentosaceus (strain ATCC 25745 / CCUG 21536 / LMG 10740 / 183-1w)</name>
    <dbReference type="NCBI Taxonomy" id="278197"/>
    <lineage>
        <taxon>Bacteria</taxon>
        <taxon>Bacillati</taxon>
        <taxon>Bacillota</taxon>
        <taxon>Bacilli</taxon>
        <taxon>Lactobacillales</taxon>
        <taxon>Lactobacillaceae</taxon>
        <taxon>Pediococcus</taxon>
    </lineage>
</organism>
<sequence>MFVKVGDKVRVISGKDKGKEGTIKQTLAKKNRVVVEGLNMIKKHQKPNNANPQGGILDVEAPMDVSNVMLIDPSTNEPTRVGFKTVDGKKVRVSKKSGESIDK</sequence>
<proteinExistence type="inferred from homology"/>
<comment type="function">
    <text evidence="1">One of two assembly initiator proteins, it binds directly to the 5'-end of the 23S rRNA, where it nucleates assembly of the 50S subunit.</text>
</comment>
<comment type="function">
    <text evidence="1">One of the proteins that surrounds the polypeptide exit tunnel on the outside of the subunit.</text>
</comment>
<comment type="subunit">
    <text evidence="1">Part of the 50S ribosomal subunit.</text>
</comment>
<comment type="similarity">
    <text evidence="1">Belongs to the universal ribosomal protein uL24 family.</text>
</comment>
<name>RL24_PEDPA</name>
<protein>
    <recommendedName>
        <fullName evidence="1">Large ribosomal subunit protein uL24</fullName>
    </recommendedName>
    <alternativeName>
        <fullName evidence="2">50S ribosomal protein L24</fullName>
    </alternativeName>
</protein>
<dbReference type="EMBL" id="CP000422">
    <property type="protein sequence ID" value="ABJ68445.1"/>
    <property type="molecule type" value="Genomic_DNA"/>
</dbReference>
<dbReference type="RefSeq" id="WP_002833338.1">
    <property type="nucleotide sequence ID" value="NC_008525.1"/>
</dbReference>
<dbReference type="SMR" id="Q03EC7"/>
<dbReference type="STRING" id="278197.PEPE_1407"/>
<dbReference type="GeneID" id="33061308"/>
<dbReference type="KEGG" id="ppe:PEPE_1407"/>
<dbReference type="eggNOG" id="COG0198">
    <property type="taxonomic scope" value="Bacteria"/>
</dbReference>
<dbReference type="HOGENOM" id="CLU_093315_2_0_9"/>
<dbReference type="OrthoDB" id="9807419at2"/>
<dbReference type="Proteomes" id="UP000000773">
    <property type="component" value="Chromosome"/>
</dbReference>
<dbReference type="GO" id="GO:1990904">
    <property type="term" value="C:ribonucleoprotein complex"/>
    <property type="evidence" value="ECO:0007669"/>
    <property type="project" value="UniProtKB-KW"/>
</dbReference>
<dbReference type="GO" id="GO:0005840">
    <property type="term" value="C:ribosome"/>
    <property type="evidence" value="ECO:0007669"/>
    <property type="project" value="UniProtKB-KW"/>
</dbReference>
<dbReference type="GO" id="GO:0019843">
    <property type="term" value="F:rRNA binding"/>
    <property type="evidence" value="ECO:0007669"/>
    <property type="project" value="UniProtKB-UniRule"/>
</dbReference>
<dbReference type="GO" id="GO:0003735">
    <property type="term" value="F:structural constituent of ribosome"/>
    <property type="evidence" value="ECO:0007669"/>
    <property type="project" value="InterPro"/>
</dbReference>
<dbReference type="GO" id="GO:0006412">
    <property type="term" value="P:translation"/>
    <property type="evidence" value="ECO:0007669"/>
    <property type="project" value="UniProtKB-UniRule"/>
</dbReference>
<dbReference type="CDD" id="cd06089">
    <property type="entry name" value="KOW_RPL26"/>
    <property type="match status" value="1"/>
</dbReference>
<dbReference type="FunFam" id="2.30.30.30:FF:000004">
    <property type="entry name" value="50S ribosomal protein L24"/>
    <property type="match status" value="1"/>
</dbReference>
<dbReference type="Gene3D" id="2.30.30.30">
    <property type="match status" value="1"/>
</dbReference>
<dbReference type="HAMAP" id="MF_01326_B">
    <property type="entry name" value="Ribosomal_uL24_B"/>
    <property type="match status" value="1"/>
</dbReference>
<dbReference type="InterPro" id="IPR005824">
    <property type="entry name" value="KOW"/>
</dbReference>
<dbReference type="InterPro" id="IPR014722">
    <property type="entry name" value="Rib_uL2_dom2"/>
</dbReference>
<dbReference type="InterPro" id="IPR003256">
    <property type="entry name" value="Ribosomal_uL24"/>
</dbReference>
<dbReference type="InterPro" id="IPR005825">
    <property type="entry name" value="Ribosomal_uL24_CS"/>
</dbReference>
<dbReference type="InterPro" id="IPR041988">
    <property type="entry name" value="Ribosomal_uL24_KOW"/>
</dbReference>
<dbReference type="InterPro" id="IPR008991">
    <property type="entry name" value="Translation_prot_SH3-like_sf"/>
</dbReference>
<dbReference type="NCBIfam" id="TIGR01079">
    <property type="entry name" value="rplX_bact"/>
    <property type="match status" value="1"/>
</dbReference>
<dbReference type="PANTHER" id="PTHR12903">
    <property type="entry name" value="MITOCHONDRIAL RIBOSOMAL PROTEIN L24"/>
    <property type="match status" value="1"/>
</dbReference>
<dbReference type="Pfam" id="PF00467">
    <property type="entry name" value="KOW"/>
    <property type="match status" value="1"/>
</dbReference>
<dbReference type="Pfam" id="PF17136">
    <property type="entry name" value="ribosomal_L24"/>
    <property type="match status" value="1"/>
</dbReference>
<dbReference type="SMART" id="SM00739">
    <property type="entry name" value="KOW"/>
    <property type="match status" value="1"/>
</dbReference>
<dbReference type="SUPFAM" id="SSF50104">
    <property type="entry name" value="Translation proteins SH3-like domain"/>
    <property type="match status" value="1"/>
</dbReference>
<dbReference type="PROSITE" id="PS01108">
    <property type="entry name" value="RIBOSOMAL_L24"/>
    <property type="match status" value="1"/>
</dbReference>
<accession>Q03EC7</accession>